<keyword id="KW-0067">ATP-binding</keyword>
<keyword id="KW-0963">Cytoplasm</keyword>
<keyword id="KW-0460">Magnesium</keyword>
<keyword id="KW-0479">Metal-binding</keyword>
<keyword id="KW-0547">Nucleotide-binding</keyword>
<keyword id="KW-0554">One-carbon metabolism</keyword>
<keyword id="KW-0630">Potassium</keyword>
<keyword id="KW-1185">Reference proteome</keyword>
<keyword id="KW-0808">Transferase</keyword>
<evidence type="ECO:0000255" key="1">
    <source>
        <dbReference type="HAMAP-Rule" id="MF_00086"/>
    </source>
</evidence>
<name>METK_PARL1</name>
<accession>A7HZ88</accession>
<feature type="chain" id="PRO_1000071240" description="S-adenosylmethionine synthase">
    <location>
        <begin position="1"/>
        <end position="389"/>
    </location>
</feature>
<feature type="region of interest" description="Flexible loop" evidence="1">
    <location>
        <begin position="102"/>
        <end position="112"/>
    </location>
</feature>
<feature type="binding site" description="in other chain" evidence="1">
    <location>
        <position position="17"/>
    </location>
    <ligand>
        <name>ATP</name>
        <dbReference type="ChEBI" id="CHEBI:30616"/>
        <note>ligand shared between two neighboring subunits</note>
    </ligand>
</feature>
<feature type="binding site" evidence="1">
    <location>
        <position position="19"/>
    </location>
    <ligand>
        <name>Mg(2+)</name>
        <dbReference type="ChEBI" id="CHEBI:18420"/>
    </ligand>
</feature>
<feature type="binding site" evidence="1">
    <location>
        <position position="45"/>
    </location>
    <ligand>
        <name>K(+)</name>
        <dbReference type="ChEBI" id="CHEBI:29103"/>
    </ligand>
</feature>
<feature type="binding site" description="in other chain" evidence="1">
    <location>
        <position position="58"/>
    </location>
    <ligand>
        <name>L-methionine</name>
        <dbReference type="ChEBI" id="CHEBI:57844"/>
        <note>ligand shared between two neighboring subunits</note>
    </ligand>
</feature>
<feature type="binding site" description="in other chain" evidence="1">
    <location>
        <position position="102"/>
    </location>
    <ligand>
        <name>L-methionine</name>
        <dbReference type="ChEBI" id="CHEBI:57844"/>
        <note>ligand shared between two neighboring subunits</note>
    </ligand>
</feature>
<feature type="binding site" description="in other chain" evidence="1">
    <location>
        <begin position="167"/>
        <end position="169"/>
    </location>
    <ligand>
        <name>ATP</name>
        <dbReference type="ChEBI" id="CHEBI:30616"/>
        <note>ligand shared between two neighboring subunits</note>
    </ligand>
</feature>
<feature type="binding site" evidence="1">
    <location>
        <position position="241"/>
    </location>
    <ligand>
        <name>ATP</name>
        <dbReference type="ChEBI" id="CHEBI:30616"/>
        <note>ligand shared between two neighboring subunits</note>
    </ligand>
</feature>
<feature type="binding site" evidence="1">
    <location>
        <position position="241"/>
    </location>
    <ligand>
        <name>L-methionine</name>
        <dbReference type="ChEBI" id="CHEBI:57844"/>
        <note>ligand shared between two neighboring subunits</note>
    </ligand>
</feature>
<feature type="binding site" description="in other chain" evidence="1">
    <location>
        <begin position="247"/>
        <end position="248"/>
    </location>
    <ligand>
        <name>ATP</name>
        <dbReference type="ChEBI" id="CHEBI:30616"/>
        <note>ligand shared between two neighboring subunits</note>
    </ligand>
</feature>
<feature type="binding site" evidence="1">
    <location>
        <position position="264"/>
    </location>
    <ligand>
        <name>ATP</name>
        <dbReference type="ChEBI" id="CHEBI:30616"/>
        <note>ligand shared between two neighboring subunits</note>
    </ligand>
</feature>
<feature type="binding site" evidence="1">
    <location>
        <position position="268"/>
    </location>
    <ligand>
        <name>ATP</name>
        <dbReference type="ChEBI" id="CHEBI:30616"/>
        <note>ligand shared between two neighboring subunits</note>
    </ligand>
</feature>
<feature type="binding site" description="in other chain" evidence="1">
    <location>
        <position position="272"/>
    </location>
    <ligand>
        <name>L-methionine</name>
        <dbReference type="ChEBI" id="CHEBI:57844"/>
        <note>ligand shared between two neighboring subunits</note>
    </ligand>
</feature>
<dbReference type="EC" id="2.5.1.6" evidence="1"/>
<dbReference type="EMBL" id="CP000774">
    <property type="protein sequence ID" value="ABS65221.1"/>
    <property type="molecule type" value="Genomic_DNA"/>
</dbReference>
<dbReference type="RefSeq" id="WP_012112482.1">
    <property type="nucleotide sequence ID" value="NC_009719.1"/>
</dbReference>
<dbReference type="SMR" id="A7HZ88"/>
<dbReference type="STRING" id="402881.Plav_3623"/>
<dbReference type="KEGG" id="pla:Plav_3623"/>
<dbReference type="eggNOG" id="COG0192">
    <property type="taxonomic scope" value="Bacteria"/>
</dbReference>
<dbReference type="HOGENOM" id="CLU_041802_1_1_5"/>
<dbReference type="OrthoDB" id="9801686at2"/>
<dbReference type="UniPathway" id="UPA00315">
    <property type="reaction ID" value="UER00080"/>
</dbReference>
<dbReference type="Proteomes" id="UP000006377">
    <property type="component" value="Chromosome"/>
</dbReference>
<dbReference type="GO" id="GO:0005737">
    <property type="term" value="C:cytoplasm"/>
    <property type="evidence" value="ECO:0007669"/>
    <property type="project" value="UniProtKB-SubCell"/>
</dbReference>
<dbReference type="GO" id="GO:0005524">
    <property type="term" value="F:ATP binding"/>
    <property type="evidence" value="ECO:0007669"/>
    <property type="project" value="UniProtKB-UniRule"/>
</dbReference>
<dbReference type="GO" id="GO:0000287">
    <property type="term" value="F:magnesium ion binding"/>
    <property type="evidence" value="ECO:0007669"/>
    <property type="project" value="UniProtKB-UniRule"/>
</dbReference>
<dbReference type="GO" id="GO:0004478">
    <property type="term" value="F:methionine adenosyltransferase activity"/>
    <property type="evidence" value="ECO:0007669"/>
    <property type="project" value="UniProtKB-UniRule"/>
</dbReference>
<dbReference type="GO" id="GO:0006730">
    <property type="term" value="P:one-carbon metabolic process"/>
    <property type="evidence" value="ECO:0007669"/>
    <property type="project" value="UniProtKB-KW"/>
</dbReference>
<dbReference type="GO" id="GO:0006556">
    <property type="term" value="P:S-adenosylmethionine biosynthetic process"/>
    <property type="evidence" value="ECO:0007669"/>
    <property type="project" value="UniProtKB-UniRule"/>
</dbReference>
<dbReference type="CDD" id="cd18079">
    <property type="entry name" value="S-AdoMet_synt"/>
    <property type="match status" value="1"/>
</dbReference>
<dbReference type="FunFam" id="3.30.300.10:FF:000003">
    <property type="entry name" value="S-adenosylmethionine synthase"/>
    <property type="match status" value="1"/>
</dbReference>
<dbReference type="Gene3D" id="3.30.300.10">
    <property type="match status" value="3"/>
</dbReference>
<dbReference type="HAMAP" id="MF_00086">
    <property type="entry name" value="S_AdoMet_synth1"/>
    <property type="match status" value="1"/>
</dbReference>
<dbReference type="InterPro" id="IPR022631">
    <property type="entry name" value="ADOMET_SYNTHASE_CS"/>
</dbReference>
<dbReference type="InterPro" id="IPR022630">
    <property type="entry name" value="S-AdoMet_synt_C"/>
</dbReference>
<dbReference type="InterPro" id="IPR022629">
    <property type="entry name" value="S-AdoMet_synt_central"/>
</dbReference>
<dbReference type="InterPro" id="IPR022628">
    <property type="entry name" value="S-AdoMet_synt_N"/>
</dbReference>
<dbReference type="InterPro" id="IPR002133">
    <property type="entry name" value="S-AdoMet_synthetase"/>
</dbReference>
<dbReference type="InterPro" id="IPR022636">
    <property type="entry name" value="S-AdoMet_synthetase_sfam"/>
</dbReference>
<dbReference type="NCBIfam" id="TIGR01034">
    <property type="entry name" value="metK"/>
    <property type="match status" value="1"/>
</dbReference>
<dbReference type="PANTHER" id="PTHR11964">
    <property type="entry name" value="S-ADENOSYLMETHIONINE SYNTHETASE"/>
    <property type="match status" value="1"/>
</dbReference>
<dbReference type="Pfam" id="PF02773">
    <property type="entry name" value="S-AdoMet_synt_C"/>
    <property type="match status" value="1"/>
</dbReference>
<dbReference type="Pfam" id="PF02772">
    <property type="entry name" value="S-AdoMet_synt_M"/>
    <property type="match status" value="1"/>
</dbReference>
<dbReference type="Pfam" id="PF00438">
    <property type="entry name" value="S-AdoMet_synt_N"/>
    <property type="match status" value="1"/>
</dbReference>
<dbReference type="PIRSF" id="PIRSF000497">
    <property type="entry name" value="MAT"/>
    <property type="match status" value="1"/>
</dbReference>
<dbReference type="SUPFAM" id="SSF55973">
    <property type="entry name" value="S-adenosylmethionine synthetase"/>
    <property type="match status" value="3"/>
</dbReference>
<dbReference type="PROSITE" id="PS00376">
    <property type="entry name" value="ADOMET_SYNTHASE_1"/>
    <property type="match status" value="1"/>
</dbReference>
<dbReference type="PROSITE" id="PS00377">
    <property type="entry name" value="ADOMET_SYNTHASE_2"/>
    <property type="match status" value="1"/>
</dbReference>
<organism>
    <name type="scientific">Parvibaculum lavamentivorans (strain DS-1 / DSM 13023 / NCIMB 13966)</name>
    <dbReference type="NCBI Taxonomy" id="402881"/>
    <lineage>
        <taxon>Bacteria</taxon>
        <taxon>Pseudomonadati</taxon>
        <taxon>Pseudomonadota</taxon>
        <taxon>Alphaproteobacteria</taxon>
        <taxon>Hyphomicrobiales</taxon>
        <taxon>Parvibaculaceae</taxon>
        <taxon>Parvibaculum</taxon>
    </lineage>
</organism>
<reference key="1">
    <citation type="journal article" date="2011" name="Stand. Genomic Sci.">
        <title>Complete genome sequence of Parvibaculum lavamentivorans type strain (DS-1(T)).</title>
        <authorList>
            <person name="Schleheck D."/>
            <person name="Weiss M."/>
            <person name="Pitluck S."/>
            <person name="Bruce D."/>
            <person name="Land M.L."/>
            <person name="Han S."/>
            <person name="Saunders E."/>
            <person name="Tapia R."/>
            <person name="Detter C."/>
            <person name="Brettin T."/>
            <person name="Han J."/>
            <person name="Woyke T."/>
            <person name="Goodwin L."/>
            <person name="Pennacchio L."/>
            <person name="Nolan M."/>
            <person name="Cook A.M."/>
            <person name="Kjelleberg S."/>
            <person name="Thomas T."/>
        </authorList>
    </citation>
    <scope>NUCLEOTIDE SEQUENCE [LARGE SCALE GENOMIC DNA]</scope>
    <source>
        <strain>DS-1 / DSM 13023 / NCIMB 13966</strain>
    </source>
</reference>
<gene>
    <name evidence="1" type="primary">metK</name>
    <name type="ordered locus">Plav_3623</name>
</gene>
<proteinExistence type="inferred from homology"/>
<sequence>MARSNFLFTSESVSEGHPDKVCDRISDAVVDLYLAADPFARVACETLTTTNKIVLAGEVRGPASITKEKVEETARNAVKAIGYEQEGFHWKNADVEVLLHAQSADIAQGVDAAGNKDEGAGDQGIMFGYACTETDVLMPSPIYYAHRILKRMAEDRHSGKRPEFEPDAKSQVTMKYENGKPVGVTSVVVSTQHKANVSQADLRELVRDAVKSVLPNGWFPPEEEFYVNPTGNFVIGGPDGDAGLTGRKIIVDTYGGWAPHGGGAFSGKDPTKVDRSAAYASRYLAKNVVAAGLSERCTIQLSYAIGVSKPLSIYCDLHGTGKVEEDAIEKAVAKCMDLSPRGIREHLQLNRPIYERTAAYGHFGRVPESDGGFSWEKTDLADKLKAEIR</sequence>
<protein>
    <recommendedName>
        <fullName evidence="1">S-adenosylmethionine synthase</fullName>
        <shortName evidence="1">AdoMet synthase</shortName>
        <ecNumber evidence="1">2.5.1.6</ecNumber>
    </recommendedName>
    <alternativeName>
        <fullName evidence="1">MAT</fullName>
    </alternativeName>
    <alternativeName>
        <fullName evidence="1">Methionine adenosyltransferase</fullName>
    </alternativeName>
</protein>
<comment type="function">
    <text evidence="1">Catalyzes the formation of S-adenosylmethionine (AdoMet) from methionine and ATP. The overall synthetic reaction is composed of two sequential steps, AdoMet formation and the subsequent tripolyphosphate hydrolysis which occurs prior to release of AdoMet from the enzyme.</text>
</comment>
<comment type="catalytic activity">
    <reaction evidence="1">
        <text>L-methionine + ATP + H2O = S-adenosyl-L-methionine + phosphate + diphosphate</text>
        <dbReference type="Rhea" id="RHEA:21080"/>
        <dbReference type="ChEBI" id="CHEBI:15377"/>
        <dbReference type="ChEBI" id="CHEBI:30616"/>
        <dbReference type="ChEBI" id="CHEBI:33019"/>
        <dbReference type="ChEBI" id="CHEBI:43474"/>
        <dbReference type="ChEBI" id="CHEBI:57844"/>
        <dbReference type="ChEBI" id="CHEBI:59789"/>
        <dbReference type="EC" id="2.5.1.6"/>
    </reaction>
</comment>
<comment type="cofactor">
    <cofactor evidence="1">
        <name>Mg(2+)</name>
        <dbReference type="ChEBI" id="CHEBI:18420"/>
    </cofactor>
    <text evidence="1">Binds 2 divalent ions per subunit.</text>
</comment>
<comment type="cofactor">
    <cofactor evidence="1">
        <name>K(+)</name>
        <dbReference type="ChEBI" id="CHEBI:29103"/>
    </cofactor>
    <text evidence="1">Binds 1 potassium ion per subunit.</text>
</comment>
<comment type="pathway">
    <text evidence="1">Amino-acid biosynthesis; S-adenosyl-L-methionine biosynthesis; S-adenosyl-L-methionine from L-methionine: step 1/1.</text>
</comment>
<comment type="subunit">
    <text evidence="1">Homotetramer; dimer of dimers.</text>
</comment>
<comment type="subcellular location">
    <subcellularLocation>
        <location evidence="1">Cytoplasm</location>
    </subcellularLocation>
</comment>
<comment type="similarity">
    <text evidence="1">Belongs to the AdoMet synthase family.</text>
</comment>